<organism>
    <name type="scientific">Thermococcus sibiricus (strain DSM 12597 / MM 739)</name>
    <dbReference type="NCBI Taxonomy" id="604354"/>
    <lineage>
        <taxon>Archaea</taxon>
        <taxon>Methanobacteriati</taxon>
        <taxon>Methanobacteriota</taxon>
        <taxon>Thermococci</taxon>
        <taxon>Thermococcales</taxon>
        <taxon>Thermococcaceae</taxon>
        <taxon>Thermococcus</taxon>
    </lineage>
</organism>
<dbReference type="EC" id="6.1.1.20" evidence="1"/>
<dbReference type="EMBL" id="CP001463">
    <property type="protein sequence ID" value="ACS89682.1"/>
    <property type="molecule type" value="Genomic_DNA"/>
</dbReference>
<dbReference type="RefSeq" id="WP_015848902.1">
    <property type="nucleotide sequence ID" value="NC_012883.1"/>
</dbReference>
<dbReference type="SMR" id="C6A237"/>
<dbReference type="STRING" id="604354.TSIB_0617"/>
<dbReference type="GeneID" id="8095605"/>
<dbReference type="KEGG" id="tsi:TSIB_0617"/>
<dbReference type="eggNOG" id="arCOG00412">
    <property type="taxonomic scope" value="Archaea"/>
</dbReference>
<dbReference type="HOGENOM" id="CLU_020279_3_0_2"/>
<dbReference type="OrthoDB" id="10073at2157"/>
<dbReference type="Proteomes" id="UP000009079">
    <property type="component" value="Chromosome"/>
</dbReference>
<dbReference type="GO" id="GO:0009328">
    <property type="term" value="C:phenylalanine-tRNA ligase complex"/>
    <property type="evidence" value="ECO:0007669"/>
    <property type="project" value="TreeGrafter"/>
</dbReference>
<dbReference type="GO" id="GO:0005524">
    <property type="term" value="F:ATP binding"/>
    <property type="evidence" value="ECO:0007669"/>
    <property type="project" value="UniProtKB-UniRule"/>
</dbReference>
<dbReference type="GO" id="GO:0000287">
    <property type="term" value="F:magnesium ion binding"/>
    <property type="evidence" value="ECO:0007669"/>
    <property type="project" value="InterPro"/>
</dbReference>
<dbReference type="GO" id="GO:0004826">
    <property type="term" value="F:phenylalanine-tRNA ligase activity"/>
    <property type="evidence" value="ECO:0007669"/>
    <property type="project" value="UniProtKB-UniRule"/>
</dbReference>
<dbReference type="GO" id="GO:0003723">
    <property type="term" value="F:RNA binding"/>
    <property type="evidence" value="ECO:0007669"/>
    <property type="project" value="InterPro"/>
</dbReference>
<dbReference type="GO" id="GO:0006432">
    <property type="term" value="P:phenylalanyl-tRNA aminoacylation"/>
    <property type="evidence" value="ECO:0007669"/>
    <property type="project" value="UniProtKB-UniRule"/>
</dbReference>
<dbReference type="CDD" id="cd00769">
    <property type="entry name" value="PheRS_beta_core"/>
    <property type="match status" value="1"/>
</dbReference>
<dbReference type="FunFam" id="3.30.56.10:FF:000011">
    <property type="entry name" value="Phenylalanine--tRNA ligase beta subunit"/>
    <property type="match status" value="1"/>
</dbReference>
<dbReference type="FunFam" id="3.30.930.10:FF:000132">
    <property type="entry name" value="Phenylalanine--tRNA ligase beta subunit"/>
    <property type="match status" value="1"/>
</dbReference>
<dbReference type="FunFam" id="3.50.40.10:FF:000003">
    <property type="entry name" value="Phenylalanine--tRNA ligase beta subunit"/>
    <property type="match status" value="1"/>
</dbReference>
<dbReference type="Gene3D" id="3.30.56.10">
    <property type="match status" value="2"/>
</dbReference>
<dbReference type="Gene3D" id="3.30.930.10">
    <property type="entry name" value="Bira Bifunctional Protein, Domain 2"/>
    <property type="match status" value="1"/>
</dbReference>
<dbReference type="Gene3D" id="3.50.40.10">
    <property type="entry name" value="Phenylalanyl-trna Synthetase, Chain B, domain 3"/>
    <property type="match status" value="1"/>
</dbReference>
<dbReference type="HAMAP" id="MF_00284">
    <property type="entry name" value="Phe_tRNA_synth_beta2"/>
    <property type="match status" value="1"/>
</dbReference>
<dbReference type="InterPro" id="IPR045864">
    <property type="entry name" value="aa-tRNA-synth_II/BPL/LPL"/>
</dbReference>
<dbReference type="InterPro" id="IPR005146">
    <property type="entry name" value="B3/B4_tRNA-bd"/>
</dbReference>
<dbReference type="InterPro" id="IPR009061">
    <property type="entry name" value="DNA-bd_dom_put_sf"/>
</dbReference>
<dbReference type="InterPro" id="IPR045060">
    <property type="entry name" value="Phe-tRNA-ligase_IIc_bsu"/>
</dbReference>
<dbReference type="InterPro" id="IPR004531">
    <property type="entry name" value="Phe-tRNA-synth_IIc_bsu_arc_euk"/>
</dbReference>
<dbReference type="InterPro" id="IPR020825">
    <property type="entry name" value="Phe-tRNA_synthase-like_B3/B4"/>
</dbReference>
<dbReference type="InterPro" id="IPR022918">
    <property type="entry name" value="Phe_tRNA_ligase_beta2_arc"/>
</dbReference>
<dbReference type="InterPro" id="IPR041616">
    <property type="entry name" value="PheRS_beta_core"/>
</dbReference>
<dbReference type="InterPro" id="IPR005147">
    <property type="entry name" value="tRNA_synthase_B5-dom"/>
</dbReference>
<dbReference type="NCBIfam" id="TIGR00471">
    <property type="entry name" value="pheT_arch"/>
    <property type="match status" value="1"/>
</dbReference>
<dbReference type="PANTHER" id="PTHR10947:SF0">
    <property type="entry name" value="PHENYLALANINE--TRNA LIGASE BETA SUBUNIT"/>
    <property type="match status" value="1"/>
</dbReference>
<dbReference type="PANTHER" id="PTHR10947">
    <property type="entry name" value="PHENYLALANYL-TRNA SYNTHETASE BETA CHAIN AND LEUCINE-RICH REPEAT-CONTAINING PROTEIN 47"/>
    <property type="match status" value="1"/>
</dbReference>
<dbReference type="Pfam" id="PF03483">
    <property type="entry name" value="B3_4"/>
    <property type="match status" value="1"/>
</dbReference>
<dbReference type="Pfam" id="PF03484">
    <property type="entry name" value="B5"/>
    <property type="match status" value="1"/>
</dbReference>
<dbReference type="Pfam" id="PF17759">
    <property type="entry name" value="tRNA_synthFbeta"/>
    <property type="match status" value="1"/>
</dbReference>
<dbReference type="SMART" id="SM00873">
    <property type="entry name" value="B3_4"/>
    <property type="match status" value="1"/>
</dbReference>
<dbReference type="SMART" id="SM00874">
    <property type="entry name" value="B5"/>
    <property type="match status" value="1"/>
</dbReference>
<dbReference type="SUPFAM" id="SSF55681">
    <property type="entry name" value="Class II aaRS and biotin synthetases"/>
    <property type="match status" value="1"/>
</dbReference>
<dbReference type="SUPFAM" id="SSF46955">
    <property type="entry name" value="Putative DNA-binding domain"/>
    <property type="match status" value="2"/>
</dbReference>
<dbReference type="PROSITE" id="PS51483">
    <property type="entry name" value="B5"/>
    <property type="match status" value="1"/>
</dbReference>
<sequence length="560" mass="64756">MPKFDVAKHDLERLVGKEFTVDEWEDLFLYAKCELDDIWEHEGKIYFKADAKDTNRPDLWSAEGIARQVRWALGMLRGLPRYSIEESNVMVYVDENLKDIRPYGVYAIVEDLELDEEALKQIIQLQEKVALTLGRKRKEVAIGTFDFDKLSPPFYYKAVEPQKIKFIPLNCEREMSADEILEEHEKGKEYGHLIKGRPYYPLLVDSEGNVLSMPPVINSETHGKVTEETKSIFIDITGWNLETIMLALNVIVTALAERGGKIRTVRVIYKDFELKTPDLTPKEFEVDLNYIKRLAGVELTDKDIKDLLERMMYEVDFVDRRVKLRYPAFRNDIMHPRDVLEDVLIAYGYNNIEPEEPELAVQGKGDDFVDFENAIRDLMVGFGLQEVMTFNLTNREAQFDKMNIPEEDIVEIENPISQKWSALRRWLLPSLMEFLSQNTHEEYPQRIFEVGKATLIDESRETKTISESKLVVAIAHPKVTFTEAKEILDSVLRHLGAEYTIREIEYGSFIPGRAGEIIVEGKKVGIIGEIHPQVLENWGVEMPVAAFEIFLRPFYKGSFL</sequence>
<reference key="1">
    <citation type="journal article" date="2009" name="Appl. Environ. Microbiol.">
        <title>Metabolic versatility and indigenous origin of the archaeon Thermococcus sibiricus, isolated from a siberian oil reservoir, as revealed by genome analysis.</title>
        <authorList>
            <person name="Mardanov A.V."/>
            <person name="Ravin N.V."/>
            <person name="Svetlitchnyi V.A."/>
            <person name="Beletsky A.V."/>
            <person name="Miroshnichenko M.L."/>
            <person name="Bonch-Osmolovskaya E.A."/>
            <person name="Skryabin K.G."/>
        </authorList>
    </citation>
    <scope>NUCLEOTIDE SEQUENCE [LARGE SCALE GENOMIC DNA]</scope>
    <source>
        <strain>DSM 12597 / MM 739</strain>
    </source>
</reference>
<comment type="catalytic activity">
    <reaction evidence="1">
        <text>tRNA(Phe) + L-phenylalanine + ATP = L-phenylalanyl-tRNA(Phe) + AMP + diphosphate + H(+)</text>
        <dbReference type="Rhea" id="RHEA:19413"/>
        <dbReference type="Rhea" id="RHEA-COMP:9668"/>
        <dbReference type="Rhea" id="RHEA-COMP:9699"/>
        <dbReference type="ChEBI" id="CHEBI:15378"/>
        <dbReference type="ChEBI" id="CHEBI:30616"/>
        <dbReference type="ChEBI" id="CHEBI:33019"/>
        <dbReference type="ChEBI" id="CHEBI:58095"/>
        <dbReference type="ChEBI" id="CHEBI:78442"/>
        <dbReference type="ChEBI" id="CHEBI:78531"/>
        <dbReference type="ChEBI" id="CHEBI:456215"/>
        <dbReference type="EC" id="6.1.1.20"/>
    </reaction>
</comment>
<comment type="cofactor">
    <cofactor evidence="1">
        <name>Mg(2+)</name>
        <dbReference type="ChEBI" id="CHEBI:18420"/>
    </cofactor>
</comment>
<comment type="subunit">
    <text evidence="1">Tetramer of two alpha and two beta subunits.</text>
</comment>
<comment type="subcellular location">
    <subcellularLocation>
        <location evidence="1">Cytoplasm</location>
    </subcellularLocation>
</comment>
<comment type="similarity">
    <text evidence="1">Belongs to the phenylalanyl-tRNA synthetase beta subunit family. Type 2 subfamily.</text>
</comment>
<protein>
    <recommendedName>
        <fullName evidence="1">Phenylalanine--tRNA ligase beta subunit</fullName>
        <ecNumber evidence="1">6.1.1.20</ecNumber>
    </recommendedName>
    <alternativeName>
        <fullName evidence="1">Phenylalanyl-tRNA synthetase beta subunit</fullName>
        <shortName evidence="1">PheRS</shortName>
    </alternativeName>
</protein>
<accession>C6A237</accession>
<evidence type="ECO:0000255" key="1">
    <source>
        <dbReference type="HAMAP-Rule" id="MF_00284"/>
    </source>
</evidence>
<keyword id="KW-0030">Aminoacyl-tRNA synthetase</keyword>
<keyword id="KW-0067">ATP-binding</keyword>
<keyword id="KW-0963">Cytoplasm</keyword>
<keyword id="KW-0436">Ligase</keyword>
<keyword id="KW-0460">Magnesium</keyword>
<keyword id="KW-0479">Metal-binding</keyword>
<keyword id="KW-0547">Nucleotide-binding</keyword>
<keyword id="KW-0648">Protein biosynthesis</keyword>
<keyword id="KW-1185">Reference proteome</keyword>
<feature type="chain" id="PRO_1000204849" description="Phenylalanine--tRNA ligase beta subunit">
    <location>
        <begin position="1"/>
        <end position="560"/>
    </location>
</feature>
<feature type="domain" description="B5" evidence="1">
    <location>
        <begin position="279"/>
        <end position="354"/>
    </location>
</feature>
<feature type="binding site" evidence="1">
    <location>
        <position position="332"/>
    </location>
    <ligand>
        <name>Mg(2+)</name>
        <dbReference type="ChEBI" id="CHEBI:18420"/>
        <note>shared with alpha subunit</note>
    </ligand>
</feature>
<feature type="binding site" evidence="1">
    <location>
        <position position="338"/>
    </location>
    <ligand>
        <name>Mg(2+)</name>
        <dbReference type="ChEBI" id="CHEBI:18420"/>
        <note>shared with alpha subunit</note>
    </ligand>
</feature>
<feature type="binding site" evidence="1">
    <location>
        <position position="341"/>
    </location>
    <ligand>
        <name>Mg(2+)</name>
        <dbReference type="ChEBI" id="CHEBI:18420"/>
        <note>shared with alpha subunit</note>
    </ligand>
</feature>
<feature type="binding site" evidence="1">
    <location>
        <position position="342"/>
    </location>
    <ligand>
        <name>Mg(2+)</name>
        <dbReference type="ChEBI" id="CHEBI:18420"/>
        <note>shared with alpha subunit</note>
    </ligand>
</feature>
<name>SYFB_THESM</name>
<gene>
    <name evidence="1" type="primary">pheT</name>
    <name type="ordered locus">TSIB_0617</name>
</gene>
<proteinExistence type="inferred from homology"/>